<feature type="chain" id="PRO_1000063545" description="3-isopropylmalate dehydratase large subunit">
    <location>
        <begin position="1"/>
        <end position="468"/>
    </location>
</feature>
<feature type="binding site" evidence="1">
    <location>
        <position position="347"/>
    </location>
    <ligand>
        <name>[4Fe-4S] cluster</name>
        <dbReference type="ChEBI" id="CHEBI:49883"/>
    </ligand>
</feature>
<feature type="binding site" evidence="1">
    <location>
        <position position="407"/>
    </location>
    <ligand>
        <name>[4Fe-4S] cluster</name>
        <dbReference type="ChEBI" id="CHEBI:49883"/>
    </ligand>
</feature>
<feature type="binding site" evidence="1">
    <location>
        <position position="410"/>
    </location>
    <ligand>
        <name>[4Fe-4S] cluster</name>
        <dbReference type="ChEBI" id="CHEBI:49883"/>
    </ligand>
</feature>
<keyword id="KW-0004">4Fe-4S</keyword>
<keyword id="KW-0028">Amino-acid biosynthesis</keyword>
<keyword id="KW-0100">Branched-chain amino acid biosynthesis</keyword>
<keyword id="KW-0408">Iron</keyword>
<keyword id="KW-0411">Iron-sulfur</keyword>
<keyword id="KW-0432">Leucine biosynthesis</keyword>
<keyword id="KW-0456">Lyase</keyword>
<keyword id="KW-0479">Metal-binding</keyword>
<sequence length="468" mass="51428">MAKTLYEKVFDAHVVYEGKNELPILYIDRHLIHEVTSPQAFSGLKMAKRRMARADLTLATIDHDVSTKSVDLNACSDMAKEQITTLMQNTKEFGVRLLGLGDKNQGIVHIVSPELGFTLPGVTLVCGDSHTATHGAFGALAFGIGTSEVEHVMATQTLKQAKLKTMKIECKGQFQKGVYAKDLILYLIAQYGTAKGTGYAIEFCGELIRNLSMEARMTLCNMAIEFGAKVGMIAPDEITFEYIKGKEFAPKGEEFQKYCEYWKSLRSDEGAKYDESITLDVSKIKPQISYGTNPSQVIGIDEKIPKISDFKNQSEQKSLLDALSYVNLEQDQVIEGVKIDIVFIGSCTNGRLEDLKIAADILKGRKIHKNVKALIVPGSMQVRKEAENLGLDKIFIEAGCEWRYAGCSMCLGMNDDKANSGQRVASTSNRNFVGRQGKGSITHLMSPASAAACAIEGVICDNRKYLGV</sequence>
<protein>
    <recommendedName>
        <fullName evidence="1">3-isopropylmalate dehydratase large subunit</fullName>
        <ecNumber evidence="1">4.2.1.33</ecNumber>
    </recommendedName>
    <alternativeName>
        <fullName evidence="1">Alpha-IPM isomerase</fullName>
        <shortName evidence="1">IPMI</shortName>
    </alternativeName>
    <alternativeName>
        <fullName evidence="1">Isopropylmalate isomerase</fullName>
    </alternativeName>
</protein>
<dbReference type="EC" id="4.2.1.33" evidence="1"/>
<dbReference type="EMBL" id="CP000538">
    <property type="protein sequence ID" value="EAQ71915.1"/>
    <property type="molecule type" value="Genomic_DNA"/>
</dbReference>
<dbReference type="SMR" id="A1W1X0"/>
<dbReference type="KEGG" id="cjj:CJJ81176_0015"/>
<dbReference type="eggNOG" id="COG0065">
    <property type="taxonomic scope" value="Bacteria"/>
</dbReference>
<dbReference type="HOGENOM" id="CLU_006714_3_4_7"/>
<dbReference type="UniPathway" id="UPA00048">
    <property type="reaction ID" value="UER00071"/>
</dbReference>
<dbReference type="Proteomes" id="UP000000646">
    <property type="component" value="Chromosome"/>
</dbReference>
<dbReference type="GO" id="GO:0003861">
    <property type="term" value="F:3-isopropylmalate dehydratase activity"/>
    <property type="evidence" value="ECO:0007669"/>
    <property type="project" value="UniProtKB-UniRule"/>
</dbReference>
<dbReference type="GO" id="GO:0051539">
    <property type="term" value="F:4 iron, 4 sulfur cluster binding"/>
    <property type="evidence" value="ECO:0007669"/>
    <property type="project" value="UniProtKB-KW"/>
</dbReference>
<dbReference type="GO" id="GO:0046872">
    <property type="term" value="F:metal ion binding"/>
    <property type="evidence" value="ECO:0007669"/>
    <property type="project" value="UniProtKB-KW"/>
</dbReference>
<dbReference type="GO" id="GO:0009098">
    <property type="term" value="P:L-leucine biosynthetic process"/>
    <property type="evidence" value="ECO:0007669"/>
    <property type="project" value="UniProtKB-UniRule"/>
</dbReference>
<dbReference type="CDD" id="cd01583">
    <property type="entry name" value="IPMI"/>
    <property type="match status" value="1"/>
</dbReference>
<dbReference type="FunFam" id="3.30.499.10:FF:000007">
    <property type="entry name" value="3-isopropylmalate dehydratase large subunit"/>
    <property type="match status" value="1"/>
</dbReference>
<dbReference type="Gene3D" id="3.30.499.10">
    <property type="entry name" value="Aconitase, domain 3"/>
    <property type="match status" value="2"/>
</dbReference>
<dbReference type="HAMAP" id="MF_01026">
    <property type="entry name" value="LeuC_type1"/>
    <property type="match status" value="1"/>
</dbReference>
<dbReference type="InterPro" id="IPR004430">
    <property type="entry name" value="3-IsopropMal_deHydase_lsu"/>
</dbReference>
<dbReference type="InterPro" id="IPR015931">
    <property type="entry name" value="Acnase/IPM_dHydase_lsu_aba_1/3"/>
</dbReference>
<dbReference type="InterPro" id="IPR001030">
    <property type="entry name" value="Acoase/IPM_deHydtase_lsu_aba"/>
</dbReference>
<dbReference type="InterPro" id="IPR018136">
    <property type="entry name" value="Aconitase_4Fe-4S_BS"/>
</dbReference>
<dbReference type="InterPro" id="IPR036008">
    <property type="entry name" value="Aconitase_4Fe-4S_dom"/>
</dbReference>
<dbReference type="InterPro" id="IPR050067">
    <property type="entry name" value="IPM_dehydratase_rel_enz"/>
</dbReference>
<dbReference type="InterPro" id="IPR033941">
    <property type="entry name" value="IPMI_cat"/>
</dbReference>
<dbReference type="NCBIfam" id="TIGR00170">
    <property type="entry name" value="leuC"/>
    <property type="match status" value="1"/>
</dbReference>
<dbReference type="NCBIfam" id="NF004016">
    <property type="entry name" value="PRK05478.1"/>
    <property type="match status" value="1"/>
</dbReference>
<dbReference type="NCBIfam" id="NF009116">
    <property type="entry name" value="PRK12466.1"/>
    <property type="match status" value="1"/>
</dbReference>
<dbReference type="PANTHER" id="PTHR43822:SF9">
    <property type="entry name" value="3-ISOPROPYLMALATE DEHYDRATASE"/>
    <property type="match status" value="1"/>
</dbReference>
<dbReference type="PANTHER" id="PTHR43822">
    <property type="entry name" value="HOMOACONITASE, MITOCHONDRIAL-RELATED"/>
    <property type="match status" value="1"/>
</dbReference>
<dbReference type="Pfam" id="PF00330">
    <property type="entry name" value="Aconitase"/>
    <property type="match status" value="1"/>
</dbReference>
<dbReference type="PRINTS" id="PR00415">
    <property type="entry name" value="ACONITASE"/>
</dbReference>
<dbReference type="SUPFAM" id="SSF53732">
    <property type="entry name" value="Aconitase iron-sulfur domain"/>
    <property type="match status" value="1"/>
</dbReference>
<dbReference type="PROSITE" id="PS00450">
    <property type="entry name" value="ACONITASE_1"/>
    <property type="match status" value="1"/>
</dbReference>
<dbReference type="PROSITE" id="PS01244">
    <property type="entry name" value="ACONITASE_2"/>
    <property type="match status" value="1"/>
</dbReference>
<organism>
    <name type="scientific">Campylobacter jejuni subsp. jejuni serotype O:23/36 (strain 81-176)</name>
    <dbReference type="NCBI Taxonomy" id="354242"/>
    <lineage>
        <taxon>Bacteria</taxon>
        <taxon>Pseudomonadati</taxon>
        <taxon>Campylobacterota</taxon>
        <taxon>Epsilonproteobacteria</taxon>
        <taxon>Campylobacterales</taxon>
        <taxon>Campylobacteraceae</taxon>
        <taxon>Campylobacter</taxon>
    </lineage>
</organism>
<comment type="function">
    <text evidence="1">Catalyzes the isomerization between 2-isopropylmalate and 3-isopropylmalate, via the formation of 2-isopropylmaleate.</text>
</comment>
<comment type="catalytic activity">
    <reaction evidence="1">
        <text>(2R,3S)-3-isopropylmalate = (2S)-2-isopropylmalate</text>
        <dbReference type="Rhea" id="RHEA:32287"/>
        <dbReference type="ChEBI" id="CHEBI:1178"/>
        <dbReference type="ChEBI" id="CHEBI:35121"/>
        <dbReference type="EC" id="4.2.1.33"/>
    </reaction>
</comment>
<comment type="cofactor">
    <cofactor evidence="1">
        <name>[4Fe-4S] cluster</name>
        <dbReference type="ChEBI" id="CHEBI:49883"/>
    </cofactor>
    <text evidence="1">Binds 1 [4Fe-4S] cluster per subunit.</text>
</comment>
<comment type="pathway">
    <text evidence="1">Amino-acid biosynthesis; L-leucine biosynthesis; L-leucine from 3-methyl-2-oxobutanoate: step 2/4.</text>
</comment>
<comment type="subunit">
    <text evidence="1">Heterodimer of LeuC and LeuD.</text>
</comment>
<comment type="similarity">
    <text evidence="1">Belongs to the aconitase/IPM isomerase family. LeuC type 1 subfamily.</text>
</comment>
<evidence type="ECO:0000255" key="1">
    <source>
        <dbReference type="HAMAP-Rule" id="MF_01026"/>
    </source>
</evidence>
<accession>A1W1X0</accession>
<name>LEUC_CAMJJ</name>
<reference key="1">
    <citation type="submission" date="2006-12" db="EMBL/GenBank/DDBJ databases">
        <authorList>
            <person name="Fouts D.E."/>
            <person name="Nelson K.E."/>
            <person name="Sebastian Y."/>
        </authorList>
    </citation>
    <scope>NUCLEOTIDE SEQUENCE [LARGE SCALE GENOMIC DNA]</scope>
    <source>
        <strain>81-176</strain>
    </source>
</reference>
<gene>
    <name evidence="1" type="primary">leuC</name>
    <name type="ordered locus">CJJ81176_0015</name>
</gene>
<proteinExistence type="inferred from homology"/>